<name>HIS2_RALN1</name>
<comment type="catalytic activity">
    <reaction>
        <text>1-(5-phospho-beta-D-ribosyl)-ATP + H2O = 1-(5-phospho-beta-D-ribosyl)-5'-AMP + diphosphate + H(+)</text>
        <dbReference type="Rhea" id="RHEA:22828"/>
        <dbReference type="ChEBI" id="CHEBI:15377"/>
        <dbReference type="ChEBI" id="CHEBI:15378"/>
        <dbReference type="ChEBI" id="CHEBI:33019"/>
        <dbReference type="ChEBI" id="CHEBI:59457"/>
        <dbReference type="ChEBI" id="CHEBI:73183"/>
        <dbReference type="EC" id="3.6.1.31"/>
    </reaction>
</comment>
<comment type="pathway">
    <text>Amino-acid biosynthesis; L-histidine biosynthesis; L-histidine from 5-phospho-alpha-D-ribose 1-diphosphate: step 2/9.</text>
</comment>
<comment type="subcellular location">
    <subcellularLocation>
        <location evidence="1">Cytoplasm</location>
    </subcellularLocation>
</comment>
<comment type="similarity">
    <text evidence="2">Belongs to the PRA-PH family.</text>
</comment>
<reference key="1">
    <citation type="journal article" date="2002" name="Nature">
        <title>Genome sequence of the plant pathogen Ralstonia solanacearum.</title>
        <authorList>
            <person name="Salanoubat M."/>
            <person name="Genin S."/>
            <person name="Artiguenave F."/>
            <person name="Gouzy J."/>
            <person name="Mangenot S."/>
            <person name="Arlat M."/>
            <person name="Billault A."/>
            <person name="Brottier P."/>
            <person name="Camus J.-C."/>
            <person name="Cattolico L."/>
            <person name="Chandler M."/>
            <person name="Choisne N."/>
            <person name="Claudel-Renard C."/>
            <person name="Cunnac S."/>
            <person name="Demange N."/>
            <person name="Gaspin C."/>
            <person name="Lavie M."/>
            <person name="Moisan A."/>
            <person name="Robert C."/>
            <person name="Saurin W."/>
            <person name="Schiex T."/>
            <person name="Siguier P."/>
            <person name="Thebault P."/>
            <person name="Whalen M."/>
            <person name="Wincker P."/>
            <person name="Levy M."/>
            <person name="Weissenbach J."/>
            <person name="Boucher C.A."/>
        </authorList>
    </citation>
    <scope>NUCLEOTIDE SEQUENCE [LARGE SCALE GENOMIC DNA]</scope>
    <source>
        <strain>ATCC BAA-1114 / GMI1000</strain>
    </source>
</reference>
<feature type="chain" id="PRO_0000136379" description="Phosphoribosyl-ATP pyrophosphatase">
    <location>
        <begin position="1"/>
        <end position="124"/>
    </location>
</feature>
<organism>
    <name type="scientific">Ralstonia nicotianae (strain ATCC BAA-1114 / GMI1000)</name>
    <name type="common">Ralstonia solanacearum</name>
    <dbReference type="NCBI Taxonomy" id="267608"/>
    <lineage>
        <taxon>Bacteria</taxon>
        <taxon>Pseudomonadati</taxon>
        <taxon>Pseudomonadota</taxon>
        <taxon>Betaproteobacteria</taxon>
        <taxon>Burkholderiales</taxon>
        <taxon>Burkholderiaceae</taxon>
        <taxon>Ralstonia</taxon>
        <taxon>Ralstonia solanacearum species complex</taxon>
    </lineage>
</organism>
<gene>
    <name type="primary">hisE</name>
    <name type="ordered locus">RSc2944</name>
    <name type="ORF">RS00143</name>
</gene>
<evidence type="ECO:0000250" key="1"/>
<evidence type="ECO:0000305" key="2"/>
<protein>
    <recommendedName>
        <fullName>Phosphoribosyl-ATP pyrophosphatase</fullName>
        <shortName>PRA-PH</shortName>
        <ecNumber>3.6.1.31</ecNumber>
    </recommendedName>
</protein>
<dbReference type="EC" id="3.6.1.31"/>
<dbReference type="EMBL" id="AL646052">
    <property type="protein sequence ID" value="CAD16651.1"/>
    <property type="molecule type" value="Genomic_DNA"/>
</dbReference>
<dbReference type="RefSeq" id="WP_011002849.1">
    <property type="nucleotide sequence ID" value="NC_003295.1"/>
</dbReference>
<dbReference type="SMR" id="Q8XV87"/>
<dbReference type="STRING" id="267608.RSc2944"/>
<dbReference type="EnsemblBacteria" id="CAD16651">
    <property type="protein sequence ID" value="CAD16651"/>
    <property type="gene ID" value="RSc2944"/>
</dbReference>
<dbReference type="KEGG" id="rso:RSc2944"/>
<dbReference type="eggNOG" id="COG0140">
    <property type="taxonomic scope" value="Bacteria"/>
</dbReference>
<dbReference type="HOGENOM" id="CLU_123337_1_2_4"/>
<dbReference type="UniPathway" id="UPA00031">
    <property type="reaction ID" value="UER00007"/>
</dbReference>
<dbReference type="Proteomes" id="UP000001436">
    <property type="component" value="Chromosome"/>
</dbReference>
<dbReference type="GO" id="GO:0005737">
    <property type="term" value="C:cytoplasm"/>
    <property type="evidence" value="ECO:0007669"/>
    <property type="project" value="UniProtKB-SubCell"/>
</dbReference>
<dbReference type="GO" id="GO:0005524">
    <property type="term" value="F:ATP binding"/>
    <property type="evidence" value="ECO:0007669"/>
    <property type="project" value="UniProtKB-KW"/>
</dbReference>
<dbReference type="GO" id="GO:0004636">
    <property type="term" value="F:phosphoribosyl-ATP diphosphatase activity"/>
    <property type="evidence" value="ECO:0007669"/>
    <property type="project" value="UniProtKB-UniRule"/>
</dbReference>
<dbReference type="GO" id="GO:0000105">
    <property type="term" value="P:L-histidine biosynthetic process"/>
    <property type="evidence" value="ECO:0007669"/>
    <property type="project" value="UniProtKB-UniRule"/>
</dbReference>
<dbReference type="CDD" id="cd11534">
    <property type="entry name" value="NTP-PPase_HisIE_like"/>
    <property type="match status" value="1"/>
</dbReference>
<dbReference type="Gene3D" id="1.10.287.1080">
    <property type="entry name" value="MazG-like"/>
    <property type="match status" value="1"/>
</dbReference>
<dbReference type="HAMAP" id="MF_01020">
    <property type="entry name" value="HisE"/>
    <property type="match status" value="1"/>
</dbReference>
<dbReference type="InterPro" id="IPR008179">
    <property type="entry name" value="HisE"/>
</dbReference>
<dbReference type="InterPro" id="IPR021130">
    <property type="entry name" value="PRib-ATP_PPHydrolase-like"/>
</dbReference>
<dbReference type="NCBIfam" id="TIGR03188">
    <property type="entry name" value="histidine_hisI"/>
    <property type="match status" value="1"/>
</dbReference>
<dbReference type="NCBIfam" id="NF001611">
    <property type="entry name" value="PRK00400.1-3"/>
    <property type="match status" value="1"/>
</dbReference>
<dbReference type="PANTHER" id="PTHR42945">
    <property type="entry name" value="HISTIDINE BIOSYNTHESIS BIFUNCTIONAL PROTEIN"/>
    <property type="match status" value="1"/>
</dbReference>
<dbReference type="PANTHER" id="PTHR42945:SF9">
    <property type="entry name" value="HISTIDINE BIOSYNTHESIS BIFUNCTIONAL PROTEIN HISIE"/>
    <property type="match status" value="1"/>
</dbReference>
<dbReference type="Pfam" id="PF01503">
    <property type="entry name" value="PRA-PH"/>
    <property type="match status" value="1"/>
</dbReference>
<dbReference type="SUPFAM" id="SSF101386">
    <property type="entry name" value="all-alpha NTP pyrophosphatases"/>
    <property type="match status" value="1"/>
</dbReference>
<sequence length="124" mass="13658">MSDTLRRLGEVLESRKLANGGDPEKSYIARLFHKGDDAILKKIGEEATETVMAAKDARAAGMTDEARGKVVYEVADLWFHTMVLLSHFDLTPDDVVNELARREGLSGLEEKALRKSQARDAAGD</sequence>
<keyword id="KW-0028">Amino-acid biosynthesis</keyword>
<keyword id="KW-0067">ATP-binding</keyword>
<keyword id="KW-0963">Cytoplasm</keyword>
<keyword id="KW-0368">Histidine biosynthesis</keyword>
<keyword id="KW-0378">Hydrolase</keyword>
<keyword id="KW-0547">Nucleotide-binding</keyword>
<keyword id="KW-1185">Reference proteome</keyword>
<accession>Q8XV87</accession>
<proteinExistence type="inferred from homology"/>